<feature type="chain" id="PRO_1000147239" description="Glucose-1-phosphate adenylyltransferase">
    <location>
        <begin position="1"/>
        <end position="380"/>
    </location>
</feature>
<feature type="binding site" evidence="1">
    <location>
        <position position="164"/>
    </location>
    <ligand>
        <name>alpha-D-glucose 1-phosphate</name>
        <dbReference type="ChEBI" id="CHEBI:58601"/>
    </ligand>
</feature>
<feature type="binding site" evidence="1">
    <location>
        <begin position="179"/>
        <end position="180"/>
    </location>
    <ligand>
        <name>alpha-D-glucose 1-phosphate</name>
        <dbReference type="ChEBI" id="CHEBI:58601"/>
    </ligand>
</feature>
<feature type="binding site" evidence="1">
    <location>
        <position position="190"/>
    </location>
    <ligand>
        <name>alpha-D-glucose 1-phosphate</name>
        <dbReference type="ChEBI" id="CHEBI:58601"/>
    </ligand>
</feature>
<protein>
    <recommendedName>
        <fullName evidence="1">Glucose-1-phosphate adenylyltransferase</fullName>
        <ecNumber evidence="1">2.7.7.27</ecNumber>
    </recommendedName>
    <alternativeName>
        <fullName evidence="1">ADP-glucose pyrophosphorylase</fullName>
        <shortName evidence="1">ADPGlc PPase</shortName>
    </alternativeName>
    <alternativeName>
        <fullName evidence="1">ADP-glucose synthase</fullName>
    </alternativeName>
</protein>
<gene>
    <name evidence="1" type="primary">glgC</name>
    <name type="ordered locus">SPP_1127</name>
</gene>
<dbReference type="EC" id="2.7.7.27" evidence="1"/>
<dbReference type="EMBL" id="CP000920">
    <property type="protein sequence ID" value="ACO21308.1"/>
    <property type="molecule type" value="Genomic_DNA"/>
</dbReference>
<dbReference type="RefSeq" id="WP_000787276.1">
    <property type="nucleotide sequence ID" value="NC_012467.1"/>
</dbReference>
<dbReference type="SMR" id="C1CKI5"/>
<dbReference type="KEGG" id="spp:SPP_1127"/>
<dbReference type="HOGENOM" id="CLU_029499_14_0_9"/>
<dbReference type="UniPathway" id="UPA00164"/>
<dbReference type="GO" id="GO:0005524">
    <property type="term" value="F:ATP binding"/>
    <property type="evidence" value="ECO:0007669"/>
    <property type="project" value="UniProtKB-KW"/>
</dbReference>
<dbReference type="GO" id="GO:0008878">
    <property type="term" value="F:glucose-1-phosphate adenylyltransferase activity"/>
    <property type="evidence" value="ECO:0007669"/>
    <property type="project" value="UniProtKB-UniRule"/>
</dbReference>
<dbReference type="GO" id="GO:0005978">
    <property type="term" value="P:glycogen biosynthetic process"/>
    <property type="evidence" value="ECO:0007669"/>
    <property type="project" value="UniProtKB-UniRule"/>
</dbReference>
<dbReference type="CDD" id="cd02508">
    <property type="entry name" value="ADP_Glucose_PP"/>
    <property type="match status" value="1"/>
</dbReference>
<dbReference type="CDD" id="cd04651">
    <property type="entry name" value="LbH_G1P_AT_C"/>
    <property type="match status" value="1"/>
</dbReference>
<dbReference type="Gene3D" id="2.160.10.10">
    <property type="entry name" value="Hexapeptide repeat proteins"/>
    <property type="match status" value="1"/>
</dbReference>
<dbReference type="Gene3D" id="3.90.550.10">
    <property type="entry name" value="Spore Coat Polysaccharide Biosynthesis Protein SpsA, Chain A"/>
    <property type="match status" value="1"/>
</dbReference>
<dbReference type="HAMAP" id="MF_00624">
    <property type="entry name" value="GlgC"/>
    <property type="match status" value="1"/>
</dbReference>
<dbReference type="InterPro" id="IPR011831">
    <property type="entry name" value="ADP-Glc_PPase"/>
</dbReference>
<dbReference type="InterPro" id="IPR005836">
    <property type="entry name" value="ADP_Glu_pyroP_CS"/>
</dbReference>
<dbReference type="InterPro" id="IPR023049">
    <property type="entry name" value="GlgC_bac"/>
</dbReference>
<dbReference type="InterPro" id="IPR056818">
    <property type="entry name" value="GlmU/GlgC-like_hexapep"/>
</dbReference>
<dbReference type="InterPro" id="IPR005835">
    <property type="entry name" value="NTP_transferase_dom"/>
</dbReference>
<dbReference type="InterPro" id="IPR029044">
    <property type="entry name" value="Nucleotide-diphossugar_trans"/>
</dbReference>
<dbReference type="InterPro" id="IPR011004">
    <property type="entry name" value="Trimer_LpxA-like_sf"/>
</dbReference>
<dbReference type="NCBIfam" id="TIGR02091">
    <property type="entry name" value="glgC"/>
    <property type="match status" value="1"/>
</dbReference>
<dbReference type="NCBIfam" id="NF003670">
    <property type="entry name" value="PRK05293.1"/>
    <property type="match status" value="1"/>
</dbReference>
<dbReference type="PANTHER" id="PTHR43523:SF2">
    <property type="entry name" value="GLUCOSE-1-PHOSPHATE ADENYLYLTRANSFERASE"/>
    <property type="match status" value="1"/>
</dbReference>
<dbReference type="PANTHER" id="PTHR43523">
    <property type="entry name" value="GLUCOSE-1-PHOSPHATE ADENYLYLTRANSFERASE-RELATED"/>
    <property type="match status" value="1"/>
</dbReference>
<dbReference type="Pfam" id="PF24894">
    <property type="entry name" value="Hexapep_GlmU"/>
    <property type="match status" value="1"/>
</dbReference>
<dbReference type="Pfam" id="PF00483">
    <property type="entry name" value="NTP_transferase"/>
    <property type="match status" value="1"/>
</dbReference>
<dbReference type="SUPFAM" id="SSF53448">
    <property type="entry name" value="Nucleotide-diphospho-sugar transferases"/>
    <property type="match status" value="1"/>
</dbReference>
<dbReference type="SUPFAM" id="SSF51161">
    <property type="entry name" value="Trimeric LpxA-like enzymes"/>
    <property type="match status" value="1"/>
</dbReference>
<dbReference type="PROSITE" id="PS00808">
    <property type="entry name" value="ADP_GLC_PYROPHOSPH_1"/>
    <property type="match status" value="1"/>
</dbReference>
<dbReference type="PROSITE" id="PS00809">
    <property type="entry name" value="ADP_GLC_PYROPHOSPH_2"/>
    <property type="match status" value="1"/>
</dbReference>
<dbReference type="PROSITE" id="PS00810">
    <property type="entry name" value="ADP_GLC_PYROPHOSPH_3"/>
    <property type="match status" value="1"/>
</dbReference>
<comment type="function">
    <text evidence="1">Involved in the biosynthesis of ADP-glucose, a building block required for the elongation reactions to produce glycogen. Catalyzes the reaction between ATP and alpha-D-glucose 1-phosphate (G1P) to produce pyrophosphate and ADP-Glc.</text>
</comment>
<comment type="catalytic activity">
    <reaction evidence="1">
        <text>alpha-D-glucose 1-phosphate + ATP + H(+) = ADP-alpha-D-glucose + diphosphate</text>
        <dbReference type="Rhea" id="RHEA:12120"/>
        <dbReference type="ChEBI" id="CHEBI:15378"/>
        <dbReference type="ChEBI" id="CHEBI:30616"/>
        <dbReference type="ChEBI" id="CHEBI:33019"/>
        <dbReference type="ChEBI" id="CHEBI:57498"/>
        <dbReference type="ChEBI" id="CHEBI:58601"/>
        <dbReference type="EC" id="2.7.7.27"/>
    </reaction>
</comment>
<comment type="pathway">
    <text evidence="1">Glycan biosynthesis; glycogen biosynthesis.</text>
</comment>
<comment type="subunit">
    <text evidence="1">Homotetramer.</text>
</comment>
<comment type="similarity">
    <text evidence="1">Belongs to the bacterial/plant glucose-1-phosphate adenylyltransferase family.</text>
</comment>
<organism>
    <name type="scientific">Streptococcus pneumoniae (strain P1031)</name>
    <dbReference type="NCBI Taxonomy" id="488223"/>
    <lineage>
        <taxon>Bacteria</taxon>
        <taxon>Bacillati</taxon>
        <taxon>Bacillota</taxon>
        <taxon>Bacilli</taxon>
        <taxon>Lactobacillales</taxon>
        <taxon>Streptococcaceae</taxon>
        <taxon>Streptococcus</taxon>
    </lineage>
</organism>
<evidence type="ECO:0000255" key="1">
    <source>
        <dbReference type="HAMAP-Rule" id="MF_00624"/>
    </source>
</evidence>
<proteinExistence type="inferred from homology"/>
<keyword id="KW-0067">ATP-binding</keyword>
<keyword id="KW-0119">Carbohydrate metabolism</keyword>
<keyword id="KW-0320">Glycogen biosynthesis</keyword>
<keyword id="KW-0321">Glycogen metabolism</keyword>
<keyword id="KW-0547">Nucleotide-binding</keyword>
<keyword id="KW-0548">Nucleotidyltransferase</keyword>
<keyword id="KW-0808">Transferase</keyword>
<accession>C1CKI5</accession>
<name>GLGC_STRZP</name>
<reference key="1">
    <citation type="journal article" date="2010" name="Genome Biol.">
        <title>Structure and dynamics of the pan-genome of Streptococcus pneumoniae and closely related species.</title>
        <authorList>
            <person name="Donati C."/>
            <person name="Hiller N.L."/>
            <person name="Tettelin H."/>
            <person name="Muzzi A."/>
            <person name="Croucher N.J."/>
            <person name="Angiuoli S.V."/>
            <person name="Oggioni M."/>
            <person name="Dunning Hotopp J.C."/>
            <person name="Hu F.Z."/>
            <person name="Riley D.R."/>
            <person name="Covacci A."/>
            <person name="Mitchell T.J."/>
            <person name="Bentley S.D."/>
            <person name="Kilian M."/>
            <person name="Ehrlich G.D."/>
            <person name="Rappuoli R."/>
            <person name="Moxon E.R."/>
            <person name="Masignani V."/>
        </authorList>
    </citation>
    <scope>NUCLEOTIDE SEQUENCE [LARGE SCALE GENOMIC DNA]</scope>
    <source>
        <strain>P1031</strain>
    </source>
</reference>
<sequence>MKNEMLALILAGGQGTRLGKLTQSIAKPAVQFGGRYRIIDFALSNCANSGIHNVGVVTQYQPLALNNHIGNGSSWGLDGINSGVSILQPYSASEGNRWFEGTSHAIYQNIDYIDSVNPEYVLILSGDHIYKMDYDDMLQSHKDNNASLTVAVLDVPLKEASRFGIMNTDANNRIVEFEEKPAQPKSTKASMGIYIFDWQRLRNMLVAAEKSKVGMSDFGKNVIPNYLESGESVYAYEFSGYWKDVGTIESLWEANMEYISPENALDSRNRQWKIYSRNLISPPNFLGANAHVEDSLVVDGCFVDGTVKHSILSTGAQVREGAEVLDSVIMSGAIIGQGAKIKRAIIGEGAIISDGVEIDGTDEVQVVGYNEVVGVATDED</sequence>